<organism>
    <name type="scientific">Rhizobium leguminosarum bv. trifolii (strain WSM2304)</name>
    <dbReference type="NCBI Taxonomy" id="395492"/>
    <lineage>
        <taxon>Bacteria</taxon>
        <taxon>Pseudomonadati</taxon>
        <taxon>Pseudomonadota</taxon>
        <taxon>Alphaproteobacteria</taxon>
        <taxon>Hyphomicrobiales</taxon>
        <taxon>Rhizobiaceae</taxon>
        <taxon>Rhizobium/Agrobacterium group</taxon>
        <taxon>Rhizobium</taxon>
    </lineage>
</organism>
<name>PDXH_RHILW</name>
<accession>B5ZSU2</accession>
<reference key="1">
    <citation type="journal article" date="2010" name="Stand. Genomic Sci.">
        <title>Complete genome sequence of Rhizobium leguminosarum bv trifolii strain WSM2304, an effective microsymbiont of the South American clover Trifolium polymorphum.</title>
        <authorList>
            <person name="Reeve W."/>
            <person name="O'Hara G."/>
            <person name="Chain P."/>
            <person name="Ardley J."/>
            <person name="Brau L."/>
            <person name="Nandesena K."/>
            <person name="Tiwari R."/>
            <person name="Malfatti S."/>
            <person name="Kiss H."/>
            <person name="Lapidus A."/>
            <person name="Copeland A."/>
            <person name="Nolan M."/>
            <person name="Land M."/>
            <person name="Ivanova N."/>
            <person name="Mavromatis K."/>
            <person name="Markowitz V."/>
            <person name="Kyrpides N."/>
            <person name="Melino V."/>
            <person name="Denton M."/>
            <person name="Yates R."/>
            <person name="Howieson J."/>
        </authorList>
    </citation>
    <scope>NUCLEOTIDE SEQUENCE [LARGE SCALE GENOMIC DNA]</scope>
    <source>
        <strain>WSM2304</strain>
    </source>
</reference>
<proteinExistence type="inferred from homology"/>
<protein>
    <recommendedName>
        <fullName evidence="1">Pyridoxine/pyridoxamine 5'-phosphate oxidase</fullName>
        <ecNumber evidence="1">1.4.3.5</ecNumber>
    </recommendedName>
    <alternativeName>
        <fullName evidence="1">PNP/PMP oxidase</fullName>
        <shortName evidence="1">PNPOx</shortName>
    </alternativeName>
    <alternativeName>
        <fullName evidence="1">Pyridoxal 5'-phosphate synthase</fullName>
    </alternativeName>
</protein>
<sequence>MSANELTSGDFTESGEPFKLFAEWLGEAEASEPNDPNAVALATVDEDGLPNVRMVLLKGFDDNGFVFYTNFESQKGREILGQKKAAMCFHWKSLRRQVRLRGPVEIVTDAEADAYFKTRARGSRIGAWASKQSRPLESRFALEKAVAEYTARYAIGEIPRPAHWSGFRIRPTSIEFWKDQNFRLHDRIEFRRPLPEGAWDKVRMYP</sequence>
<comment type="function">
    <text evidence="1">Catalyzes the oxidation of either pyridoxine 5'-phosphate (PNP) or pyridoxamine 5'-phosphate (PMP) into pyridoxal 5'-phosphate (PLP).</text>
</comment>
<comment type="catalytic activity">
    <reaction evidence="1">
        <text>pyridoxamine 5'-phosphate + O2 + H2O = pyridoxal 5'-phosphate + H2O2 + NH4(+)</text>
        <dbReference type="Rhea" id="RHEA:15817"/>
        <dbReference type="ChEBI" id="CHEBI:15377"/>
        <dbReference type="ChEBI" id="CHEBI:15379"/>
        <dbReference type="ChEBI" id="CHEBI:16240"/>
        <dbReference type="ChEBI" id="CHEBI:28938"/>
        <dbReference type="ChEBI" id="CHEBI:58451"/>
        <dbReference type="ChEBI" id="CHEBI:597326"/>
        <dbReference type="EC" id="1.4.3.5"/>
    </reaction>
</comment>
<comment type="catalytic activity">
    <reaction evidence="1">
        <text>pyridoxine 5'-phosphate + O2 = pyridoxal 5'-phosphate + H2O2</text>
        <dbReference type="Rhea" id="RHEA:15149"/>
        <dbReference type="ChEBI" id="CHEBI:15379"/>
        <dbReference type="ChEBI" id="CHEBI:16240"/>
        <dbReference type="ChEBI" id="CHEBI:58589"/>
        <dbReference type="ChEBI" id="CHEBI:597326"/>
        <dbReference type="EC" id="1.4.3.5"/>
    </reaction>
</comment>
<comment type="cofactor">
    <cofactor evidence="1">
        <name>FMN</name>
        <dbReference type="ChEBI" id="CHEBI:58210"/>
    </cofactor>
    <text evidence="1">Binds 1 FMN per subunit.</text>
</comment>
<comment type="pathway">
    <text evidence="1">Cofactor metabolism; pyridoxal 5'-phosphate salvage; pyridoxal 5'-phosphate from pyridoxamine 5'-phosphate: step 1/1.</text>
</comment>
<comment type="pathway">
    <text evidence="1">Cofactor metabolism; pyridoxal 5'-phosphate salvage; pyridoxal 5'-phosphate from pyridoxine 5'-phosphate: step 1/1.</text>
</comment>
<comment type="subunit">
    <text evidence="1">Homodimer.</text>
</comment>
<comment type="similarity">
    <text evidence="1">Belongs to the pyridoxamine 5'-phosphate oxidase family.</text>
</comment>
<keyword id="KW-0285">Flavoprotein</keyword>
<keyword id="KW-0288">FMN</keyword>
<keyword id="KW-0560">Oxidoreductase</keyword>
<keyword id="KW-0664">Pyridoxine biosynthesis</keyword>
<keyword id="KW-1185">Reference proteome</keyword>
<feature type="chain" id="PRO_1000186329" description="Pyridoxine/pyridoxamine 5'-phosphate oxidase">
    <location>
        <begin position="1"/>
        <end position="206"/>
    </location>
</feature>
<feature type="binding site" evidence="1">
    <location>
        <begin position="53"/>
        <end position="58"/>
    </location>
    <ligand>
        <name>FMN</name>
        <dbReference type="ChEBI" id="CHEBI:58210"/>
    </ligand>
</feature>
<feature type="binding site" evidence="1">
    <location>
        <position position="58"/>
    </location>
    <ligand>
        <name>substrate</name>
    </ligand>
</feature>
<feature type="binding site" evidence="1">
    <location>
        <begin position="68"/>
        <end position="69"/>
    </location>
    <ligand>
        <name>FMN</name>
        <dbReference type="ChEBI" id="CHEBI:58210"/>
    </ligand>
</feature>
<feature type="binding site" evidence="1">
    <location>
        <position position="75"/>
    </location>
    <ligand>
        <name>FMN</name>
        <dbReference type="ChEBI" id="CHEBI:58210"/>
    </ligand>
</feature>
<feature type="binding site" evidence="1">
    <location>
        <position position="97"/>
    </location>
    <ligand>
        <name>FMN</name>
        <dbReference type="ChEBI" id="CHEBI:58210"/>
    </ligand>
</feature>
<feature type="binding site" evidence="1">
    <location>
        <position position="115"/>
    </location>
    <ligand>
        <name>substrate</name>
    </ligand>
</feature>
<feature type="binding site" evidence="1">
    <location>
        <position position="119"/>
    </location>
    <ligand>
        <name>substrate</name>
    </ligand>
</feature>
<feature type="binding site" evidence="1">
    <location>
        <position position="123"/>
    </location>
    <ligand>
        <name>substrate</name>
    </ligand>
</feature>
<feature type="binding site" evidence="1">
    <location>
        <begin position="132"/>
        <end position="133"/>
    </location>
    <ligand>
        <name>FMN</name>
        <dbReference type="ChEBI" id="CHEBI:58210"/>
    </ligand>
</feature>
<feature type="binding site" evidence="1">
    <location>
        <position position="177"/>
    </location>
    <ligand>
        <name>FMN</name>
        <dbReference type="ChEBI" id="CHEBI:58210"/>
    </ligand>
</feature>
<feature type="binding site" evidence="1">
    <location>
        <begin position="183"/>
        <end position="185"/>
    </location>
    <ligand>
        <name>substrate</name>
    </ligand>
</feature>
<feature type="binding site" evidence="1">
    <location>
        <position position="187"/>
    </location>
    <ligand>
        <name>FMN</name>
        <dbReference type="ChEBI" id="CHEBI:58210"/>
    </ligand>
</feature>
<gene>
    <name evidence="1" type="primary">pdxH</name>
    <name type="ordered locus">Rleg2_0594</name>
</gene>
<evidence type="ECO:0000255" key="1">
    <source>
        <dbReference type="HAMAP-Rule" id="MF_01629"/>
    </source>
</evidence>
<dbReference type="EC" id="1.4.3.5" evidence="1"/>
<dbReference type="EMBL" id="CP001191">
    <property type="protein sequence ID" value="ACI53891.1"/>
    <property type="molecule type" value="Genomic_DNA"/>
</dbReference>
<dbReference type="RefSeq" id="WP_012556803.1">
    <property type="nucleotide sequence ID" value="NC_011369.1"/>
</dbReference>
<dbReference type="SMR" id="B5ZSU2"/>
<dbReference type="STRING" id="395492.Rleg2_0594"/>
<dbReference type="KEGG" id="rlt:Rleg2_0594"/>
<dbReference type="eggNOG" id="COG0259">
    <property type="taxonomic scope" value="Bacteria"/>
</dbReference>
<dbReference type="HOGENOM" id="CLU_032263_2_2_5"/>
<dbReference type="UniPathway" id="UPA01068">
    <property type="reaction ID" value="UER00304"/>
</dbReference>
<dbReference type="UniPathway" id="UPA01068">
    <property type="reaction ID" value="UER00305"/>
</dbReference>
<dbReference type="Proteomes" id="UP000008330">
    <property type="component" value="Chromosome"/>
</dbReference>
<dbReference type="GO" id="GO:0010181">
    <property type="term" value="F:FMN binding"/>
    <property type="evidence" value="ECO:0007669"/>
    <property type="project" value="UniProtKB-UniRule"/>
</dbReference>
<dbReference type="GO" id="GO:0004733">
    <property type="term" value="F:pyridoxamine phosphate oxidase activity"/>
    <property type="evidence" value="ECO:0007669"/>
    <property type="project" value="UniProtKB-UniRule"/>
</dbReference>
<dbReference type="GO" id="GO:0008615">
    <property type="term" value="P:pyridoxine biosynthetic process"/>
    <property type="evidence" value="ECO:0007669"/>
    <property type="project" value="UniProtKB-KW"/>
</dbReference>
<dbReference type="Gene3D" id="2.30.110.10">
    <property type="entry name" value="Electron Transport, Fmn-binding Protein, Chain A"/>
    <property type="match status" value="1"/>
</dbReference>
<dbReference type="HAMAP" id="MF_01629">
    <property type="entry name" value="PdxH"/>
    <property type="match status" value="1"/>
</dbReference>
<dbReference type="InterPro" id="IPR000659">
    <property type="entry name" value="Pyridox_Oxase"/>
</dbReference>
<dbReference type="InterPro" id="IPR011576">
    <property type="entry name" value="Pyridox_Oxase_N"/>
</dbReference>
<dbReference type="InterPro" id="IPR019576">
    <property type="entry name" value="Pyridoxamine_oxidase_dimer_C"/>
</dbReference>
<dbReference type="InterPro" id="IPR012349">
    <property type="entry name" value="Split_barrel_FMN-bd"/>
</dbReference>
<dbReference type="NCBIfam" id="TIGR00558">
    <property type="entry name" value="pdxH"/>
    <property type="match status" value="1"/>
</dbReference>
<dbReference type="NCBIfam" id="NF004231">
    <property type="entry name" value="PRK05679.1"/>
    <property type="match status" value="1"/>
</dbReference>
<dbReference type="PANTHER" id="PTHR10851:SF0">
    <property type="entry name" value="PYRIDOXINE-5'-PHOSPHATE OXIDASE"/>
    <property type="match status" value="1"/>
</dbReference>
<dbReference type="PANTHER" id="PTHR10851">
    <property type="entry name" value="PYRIDOXINE-5-PHOSPHATE OXIDASE"/>
    <property type="match status" value="1"/>
</dbReference>
<dbReference type="Pfam" id="PF10590">
    <property type="entry name" value="PNP_phzG_C"/>
    <property type="match status" value="1"/>
</dbReference>
<dbReference type="Pfam" id="PF01243">
    <property type="entry name" value="PNPOx_N"/>
    <property type="match status" value="1"/>
</dbReference>
<dbReference type="PIRSF" id="PIRSF000190">
    <property type="entry name" value="Pyd_amn-ph_oxd"/>
    <property type="match status" value="1"/>
</dbReference>
<dbReference type="SUPFAM" id="SSF50475">
    <property type="entry name" value="FMN-binding split barrel"/>
    <property type="match status" value="1"/>
</dbReference>